<feature type="chain" id="PRO_1000188828" description="L-ribulose-5-phosphate 3-epimerase UlaE">
    <location>
        <begin position="1"/>
        <end position="284"/>
    </location>
</feature>
<evidence type="ECO:0000255" key="1">
    <source>
        <dbReference type="HAMAP-Rule" id="MF_01951"/>
    </source>
</evidence>
<protein>
    <recommendedName>
        <fullName evidence="1">L-ribulose-5-phosphate 3-epimerase UlaE</fullName>
        <ecNumber evidence="1">5.1.3.22</ecNumber>
    </recommendedName>
    <alternativeName>
        <fullName evidence="1">L-ascorbate utilization protein E</fullName>
    </alternativeName>
    <alternativeName>
        <fullName evidence="1">L-xylulose-5-phosphate 3-epimerase</fullName>
    </alternativeName>
</protein>
<gene>
    <name evidence="1" type="primary">ulaE</name>
    <name type="ordered locus">ECSE_4495</name>
</gene>
<comment type="function">
    <text evidence="1">Catalyzes the isomerization of L-xylulose-5-phosphate to L-ribulose-5-phosphate. Is involved in the anaerobic L-ascorbate utilization.</text>
</comment>
<comment type="catalytic activity">
    <reaction evidence="1">
        <text>L-ribulose 5-phosphate = L-xylulose 5-phosphate</text>
        <dbReference type="Rhea" id="RHEA:18497"/>
        <dbReference type="ChEBI" id="CHEBI:57829"/>
        <dbReference type="ChEBI" id="CHEBI:58226"/>
        <dbReference type="EC" id="5.1.3.22"/>
    </reaction>
</comment>
<comment type="pathway">
    <text evidence="1">Cofactor degradation; L-ascorbate degradation; D-xylulose 5-phosphate from L-ascorbate: step 3/4.</text>
</comment>
<comment type="induction">
    <text evidence="1">Induced by L-ascorbate. Repressed by UlaR.</text>
</comment>
<comment type="similarity">
    <text evidence="1">Belongs to the L-ribulose-5-phosphate 3-epimerase family.</text>
</comment>
<organism>
    <name type="scientific">Escherichia coli (strain SE11)</name>
    <dbReference type="NCBI Taxonomy" id="409438"/>
    <lineage>
        <taxon>Bacteria</taxon>
        <taxon>Pseudomonadati</taxon>
        <taxon>Pseudomonadota</taxon>
        <taxon>Gammaproteobacteria</taxon>
        <taxon>Enterobacterales</taxon>
        <taxon>Enterobacteriaceae</taxon>
        <taxon>Escherichia</taxon>
    </lineage>
</organism>
<proteinExistence type="inferred from homology"/>
<dbReference type="EC" id="5.1.3.22" evidence="1"/>
<dbReference type="EMBL" id="AP009240">
    <property type="protein sequence ID" value="BAG80019.1"/>
    <property type="molecule type" value="Genomic_DNA"/>
</dbReference>
<dbReference type="RefSeq" id="WP_000949539.1">
    <property type="nucleotide sequence ID" value="NC_011415.1"/>
</dbReference>
<dbReference type="SMR" id="B6I2A2"/>
<dbReference type="GeneID" id="75202431"/>
<dbReference type="KEGG" id="ecy:ECSE_4495"/>
<dbReference type="HOGENOM" id="CLU_082738_0_0_6"/>
<dbReference type="UniPathway" id="UPA00263">
    <property type="reaction ID" value="UER00379"/>
</dbReference>
<dbReference type="Proteomes" id="UP000008199">
    <property type="component" value="Chromosome"/>
</dbReference>
<dbReference type="GO" id="GO:0016861">
    <property type="term" value="F:intramolecular oxidoreductase activity, interconverting aldoses and ketoses"/>
    <property type="evidence" value="ECO:0007669"/>
    <property type="project" value="InterPro"/>
</dbReference>
<dbReference type="GO" id="GO:0034015">
    <property type="term" value="F:L-ribulose-5-phosphate 3-epimerase activity"/>
    <property type="evidence" value="ECO:0007669"/>
    <property type="project" value="UniProtKB-UniRule"/>
</dbReference>
<dbReference type="GO" id="GO:0019854">
    <property type="term" value="P:L-ascorbic acid catabolic process"/>
    <property type="evidence" value="ECO:0007669"/>
    <property type="project" value="UniProtKB-UniRule"/>
</dbReference>
<dbReference type="FunFam" id="3.20.20.150:FF:000003">
    <property type="entry name" value="L-ribulose-5-phosphate 3-epimerase UlaE"/>
    <property type="match status" value="1"/>
</dbReference>
<dbReference type="Gene3D" id="3.20.20.150">
    <property type="entry name" value="Divalent-metal-dependent TIM barrel enzymes"/>
    <property type="match status" value="1"/>
</dbReference>
<dbReference type="HAMAP" id="MF_01951">
    <property type="entry name" value="UlaE"/>
    <property type="match status" value="1"/>
</dbReference>
<dbReference type="InterPro" id="IPR004560">
    <property type="entry name" value="L-Ru-5P_3-Epase"/>
</dbReference>
<dbReference type="InterPro" id="IPR023492">
    <property type="entry name" value="L-Ru-5P_3-Epase_Enterobacteria"/>
</dbReference>
<dbReference type="InterPro" id="IPR050417">
    <property type="entry name" value="Sugar_Epim/Isomerase"/>
</dbReference>
<dbReference type="InterPro" id="IPR036237">
    <property type="entry name" value="Xyl_isomerase-like_sf"/>
</dbReference>
<dbReference type="InterPro" id="IPR013022">
    <property type="entry name" value="Xyl_isomerase-like_TIM-brl"/>
</dbReference>
<dbReference type="NCBIfam" id="TIGR00542">
    <property type="entry name" value="hxl6Piso_put"/>
    <property type="match status" value="1"/>
</dbReference>
<dbReference type="NCBIfam" id="NF009688">
    <property type="entry name" value="PRK13209.1"/>
    <property type="match status" value="1"/>
</dbReference>
<dbReference type="NCBIfam" id="NF009689">
    <property type="entry name" value="PRK13210.1"/>
    <property type="match status" value="1"/>
</dbReference>
<dbReference type="PANTHER" id="PTHR43489">
    <property type="entry name" value="ISOMERASE"/>
    <property type="match status" value="1"/>
</dbReference>
<dbReference type="PANTHER" id="PTHR43489:SF8">
    <property type="entry name" value="L-RIBULOSE-5-PHOSPHATE 3-EPIMERASE ULAE"/>
    <property type="match status" value="1"/>
</dbReference>
<dbReference type="Pfam" id="PF01261">
    <property type="entry name" value="AP_endonuc_2"/>
    <property type="match status" value="1"/>
</dbReference>
<dbReference type="SUPFAM" id="SSF51658">
    <property type="entry name" value="Xylose isomerase-like"/>
    <property type="match status" value="1"/>
</dbReference>
<sequence length="284" mass="32077">MLSKQIPLGIYEKALPAGECWLERLRLAKTLGFDFVEMSVDETDERLSRLDWSREQRLALVNAIVETGVRVPSMCLSAHRRFPLGSEDDAVRAQGLEIMRKAIQFAQDVGIRVIQLAGYDVYYQEANNETRRRFRDGLKESVEMASRAQVTLAMEIMDYPLMNSISKALGYAHYLNNPWFQLYPDIGNLSAWDNDVQMELQAGIGHIVAVHVKDTKPGVFKNVPFGEGVVDFERCFETLKQSGYCGPYLIEMWSETAEDPAAEVAKARDWVKARMAKAGMVEAA</sequence>
<accession>B6I2A2</accession>
<keyword id="KW-0413">Isomerase</keyword>
<name>ULAE_ECOSE</name>
<reference key="1">
    <citation type="journal article" date="2008" name="DNA Res.">
        <title>Complete genome sequence and comparative analysis of the wild-type commensal Escherichia coli strain SE11 isolated from a healthy adult.</title>
        <authorList>
            <person name="Oshima K."/>
            <person name="Toh H."/>
            <person name="Ogura Y."/>
            <person name="Sasamoto H."/>
            <person name="Morita H."/>
            <person name="Park S.-H."/>
            <person name="Ooka T."/>
            <person name="Iyoda S."/>
            <person name="Taylor T.D."/>
            <person name="Hayashi T."/>
            <person name="Itoh K."/>
            <person name="Hattori M."/>
        </authorList>
    </citation>
    <scope>NUCLEOTIDE SEQUENCE [LARGE SCALE GENOMIC DNA]</scope>
    <source>
        <strain>SE11</strain>
    </source>
</reference>